<sequence>METIFAQSSAFGKAGVAVFRISGPKSLEVLQLLTGRKDFKSRLMYYQQITVPETKELIDNVMVVYFKSPGSFTGEDVVEIHTHGSKAISIMLTNALLNIAGIRLAEAGEFTKRAFLNNKFDLTAAEGIADLINAETIMQHKQAIRQASGKLEALYNNWRSQLLKMLSLLEAYIDFPDEDIPDTVLNEVTNTHTILVNTISEYLNDNRKGELLRSGLKLAIIGPPNVGKSSLLNFLMQRDIAIVSNIAGTTRDIIEGHLDIGGYPIILQDTAGIREESSDIIEQEGIKRAINSAKTADIKIIMFDAEKLDSSINEDIINLIDENTITIINKIDLIEASKIFSIENKYKCLRVSVKNNIALSSILKNIENIAENMAGFTETPYITNQRHRNYLQQALSHLTAFSLDNDLVLATEDIRMTARCIGAITGVINVEEILGEIFKNFCIGK</sequence>
<accession>Q92GE8</accession>
<reference key="1">
    <citation type="journal article" date="2001" name="Science">
        <title>Mechanisms of evolution in Rickettsia conorii and R. prowazekii.</title>
        <authorList>
            <person name="Ogata H."/>
            <person name="Audic S."/>
            <person name="Renesto-Audiffren P."/>
            <person name="Fournier P.-E."/>
            <person name="Barbe V."/>
            <person name="Samson D."/>
            <person name="Roux V."/>
            <person name="Cossart P."/>
            <person name="Weissenbach J."/>
            <person name="Claverie J.-M."/>
            <person name="Raoult D."/>
        </authorList>
    </citation>
    <scope>NUCLEOTIDE SEQUENCE [LARGE SCALE GENOMIC DNA]</scope>
    <source>
        <strain>ATCC VR-613 / Malish 7</strain>
    </source>
</reference>
<evidence type="ECO:0000255" key="1">
    <source>
        <dbReference type="HAMAP-Rule" id="MF_00379"/>
    </source>
</evidence>
<dbReference type="EC" id="3.6.-.-" evidence="1"/>
<dbReference type="EMBL" id="AE006914">
    <property type="protein sequence ID" value="AAL03713.1"/>
    <property type="molecule type" value="Genomic_DNA"/>
</dbReference>
<dbReference type="PIR" id="G97846">
    <property type="entry name" value="G97846"/>
</dbReference>
<dbReference type="RefSeq" id="WP_010977743.1">
    <property type="nucleotide sequence ID" value="NC_003103.1"/>
</dbReference>
<dbReference type="SMR" id="Q92GE8"/>
<dbReference type="GeneID" id="928327"/>
<dbReference type="KEGG" id="rco:RC1175"/>
<dbReference type="PATRIC" id="fig|272944.4.peg.1351"/>
<dbReference type="HOGENOM" id="CLU_019624_3_1_5"/>
<dbReference type="Proteomes" id="UP000000816">
    <property type="component" value="Chromosome"/>
</dbReference>
<dbReference type="GO" id="GO:0005737">
    <property type="term" value="C:cytoplasm"/>
    <property type="evidence" value="ECO:0007669"/>
    <property type="project" value="UniProtKB-SubCell"/>
</dbReference>
<dbReference type="GO" id="GO:0005525">
    <property type="term" value="F:GTP binding"/>
    <property type="evidence" value="ECO:0007669"/>
    <property type="project" value="UniProtKB-UniRule"/>
</dbReference>
<dbReference type="GO" id="GO:0003924">
    <property type="term" value="F:GTPase activity"/>
    <property type="evidence" value="ECO:0007669"/>
    <property type="project" value="UniProtKB-UniRule"/>
</dbReference>
<dbReference type="GO" id="GO:0046872">
    <property type="term" value="F:metal ion binding"/>
    <property type="evidence" value="ECO:0007669"/>
    <property type="project" value="UniProtKB-KW"/>
</dbReference>
<dbReference type="GO" id="GO:0030488">
    <property type="term" value="P:tRNA methylation"/>
    <property type="evidence" value="ECO:0007669"/>
    <property type="project" value="TreeGrafter"/>
</dbReference>
<dbReference type="GO" id="GO:0002098">
    <property type="term" value="P:tRNA wobble uridine modification"/>
    <property type="evidence" value="ECO:0007669"/>
    <property type="project" value="TreeGrafter"/>
</dbReference>
<dbReference type="CDD" id="cd04164">
    <property type="entry name" value="trmE"/>
    <property type="match status" value="1"/>
</dbReference>
<dbReference type="CDD" id="cd14858">
    <property type="entry name" value="TrmE_N"/>
    <property type="match status" value="1"/>
</dbReference>
<dbReference type="FunFam" id="3.30.1360.120:FF:000007">
    <property type="entry name" value="tRNA modification GTPase GTPBP3, mitochondrial"/>
    <property type="match status" value="1"/>
</dbReference>
<dbReference type="Gene3D" id="3.40.50.300">
    <property type="entry name" value="P-loop containing nucleotide triphosphate hydrolases"/>
    <property type="match status" value="1"/>
</dbReference>
<dbReference type="Gene3D" id="3.30.1360.120">
    <property type="entry name" value="Probable tRNA modification gtpase trme, domain 1"/>
    <property type="match status" value="1"/>
</dbReference>
<dbReference type="Gene3D" id="1.20.120.430">
    <property type="entry name" value="tRNA modification GTPase MnmE domain 2"/>
    <property type="match status" value="1"/>
</dbReference>
<dbReference type="HAMAP" id="MF_00379">
    <property type="entry name" value="GTPase_MnmE"/>
    <property type="match status" value="1"/>
</dbReference>
<dbReference type="InterPro" id="IPR031168">
    <property type="entry name" value="G_TrmE"/>
</dbReference>
<dbReference type="InterPro" id="IPR006073">
    <property type="entry name" value="GTP-bd"/>
</dbReference>
<dbReference type="InterPro" id="IPR018948">
    <property type="entry name" value="GTP-bd_TrmE_N"/>
</dbReference>
<dbReference type="InterPro" id="IPR004520">
    <property type="entry name" value="GTPase_MnmE"/>
</dbReference>
<dbReference type="InterPro" id="IPR027368">
    <property type="entry name" value="MnmE_dom2"/>
</dbReference>
<dbReference type="InterPro" id="IPR025867">
    <property type="entry name" value="MnmE_helical"/>
</dbReference>
<dbReference type="InterPro" id="IPR027417">
    <property type="entry name" value="P-loop_NTPase"/>
</dbReference>
<dbReference type="InterPro" id="IPR005225">
    <property type="entry name" value="Small_GTP-bd"/>
</dbReference>
<dbReference type="InterPro" id="IPR027266">
    <property type="entry name" value="TrmE/GcvT_dom1"/>
</dbReference>
<dbReference type="NCBIfam" id="TIGR00450">
    <property type="entry name" value="mnmE_trmE_thdF"/>
    <property type="match status" value="1"/>
</dbReference>
<dbReference type="NCBIfam" id="NF003661">
    <property type="entry name" value="PRK05291.1-3"/>
    <property type="match status" value="1"/>
</dbReference>
<dbReference type="NCBIfam" id="TIGR00231">
    <property type="entry name" value="small_GTP"/>
    <property type="match status" value="1"/>
</dbReference>
<dbReference type="PANTHER" id="PTHR42714">
    <property type="entry name" value="TRNA MODIFICATION GTPASE GTPBP3"/>
    <property type="match status" value="1"/>
</dbReference>
<dbReference type="PANTHER" id="PTHR42714:SF2">
    <property type="entry name" value="TRNA MODIFICATION GTPASE GTPBP3, MITOCHONDRIAL"/>
    <property type="match status" value="1"/>
</dbReference>
<dbReference type="Pfam" id="PF01926">
    <property type="entry name" value="MMR_HSR1"/>
    <property type="match status" value="1"/>
</dbReference>
<dbReference type="Pfam" id="PF12631">
    <property type="entry name" value="MnmE_helical"/>
    <property type="match status" value="1"/>
</dbReference>
<dbReference type="Pfam" id="PF10396">
    <property type="entry name" value="TrmE_N"/>
    <property type="match status" value="1"/>
</dbReference>
<dbReference type="SUPFAM" id="SSF52540">
    <property type="entry name" value="P-loop containing nucleoside triphosphate hydrolases"/>
    <property type="match status" value="1"/>
</dbReference>
<dbReference type="SUPFAM" id="SSF116878">
    <property type="entry name" value="TrmE connector domain"/>
    <property type="match status" value="1"/>
</dbReference>
<dbReference type="PROSITE" id="PS51709">
    <property type="entry name" value="G_TRME"/>
    <property type="match status" value="1"/>
</dbReference>
<gene>
    <name evidence="1" type="primary">mnmE</name>
    <name evidence="1" type="synonym">thdF</name>
    <name evidence="1" type="synonym">trmE</name>
    <name type="ordered locus">RC1175</name>
</gene>
<name>MNME_RICCN</name>
<comment type="function">
    <text evidence="1">Exhibits a very high intrinsic GTPase hydrolysis rate. Involved in the addition of a carboxymethylaminomethyl (cmnm) group at the wobble position (U34) of certain tRNAs, forming tRNA-cmnm(5)s(2)U34.</text>
</comment>
<comment type="cofactor">
    <cofactor evidence="1">
        <name>K(+)</name>
        <dbReference type="ChEBI" id="CHEBI:29103"/>
    </cofactor>
    <text evidence="1">Binds 1 potassium ion per subunit.</text>
</comment>
<comment type="subunit">
    <text evidence="1">Homodimer. Heterotetramer of two MnmE and two MnmG subunits.</text>
</comment>
<comment type="subcellular location">
    <subcellularLocation>
        <location evidence="1">Cytoplasm</location>
    </subcellularLocation>
</comment>
<comment type="similarity">
    <text evidence="1">Belongs to the TRAFAC class TrmE-Era-EngA-EngB-Septin-like GTPase superfamily. TrmE GTPase family.</text>
</comment>
<proteinExistence type="inferred from homology"/>
<feature type="chain" id="PRO_0000188909" description="tRNA modification GTPase MnmE">
    <location>
        <begin position="1"/>
        <end position="445"/>
    </location>
</feature>
<feature type="domain" description="TrmE-type G">
    <location>
        <begin position="215"/>
        <end position="371"/>
    </location>
</feature>
<feature type="binding site" evidence="1">
    <location>
        <position position="20"/>
    </location>
    <ligand>
        <name>(6S)-5-formyl-5,6,7,8-tetrahydrofolate</name>
        <dbReference type="ChEBI" id="CHEBI:57457"/>
    </ligand>
</feature>
<feature type="binding site" evidence="1">
    <location>
        <position position="79"/>
    </location>
    <ligand>
        <name>(6S)-5-formyl-5,6,7,8-tetrahydrofolate</name>
        <dbReference type="ChEBI" id="CHEBI:57457"/>
    </ligand>
</feature>
<feature type="binding site" evidence="1">
    <location>
        <position position="119"/>
    </location>
    <ligand>
        <name>(6S)-5-formyl-5,6,7,8-tetrahydrofolate</name>
        <dbReference type="ChEBI" id="CHEBI:57457"/>
    </ligand>
</feature>
<feature type="binding site" evidence="1">
    <location>
        <begin position="225"/>
        <end position="230"/>
    </location>
    <ligand>
        <name>GTP</name>
        <dbReference type="ChEBI" id="CHEBI:37565"/>
    </ligand>
</feature>
<feature type="binding site" evidence="1">
    <location>
        <position position="225"/>
    </location>
    <ligand>
        <name>K(+)</name>
        <dbReference type="ChEBI" id="CHEBI:29103"/>
    </ligand>
</feature>
<feature type="binding site" evidence="1">
    <location>
        <position position="229"/>
    </location>
    <ligand>
        <name>Mg(2+)</name>
        <dbReference type="ChEBI" id="CHEBI:18420"/>
    </ligand>
</feature>
<feature type="binding site" evidence="1">
    <location>
        <begin position="244"/>
        <end position="250"/>
    </location>
    <ligand>
        <name>GTP</name>
        <dbReference type="ChEBI" id="CHEBI:37565"/>
    </ligand>
</feature>
<feature type="binding site" evidence="1">
    <location>
        <position position="244"/>
    </location>
    <ligand>
        <name>K(+)</name>
        <dbReference type="ChEBI" id="CHEBI:29103"/>
    </ligand>
</feature>
<feature type="binding site" evidence="1">
    <location>
        <position position="246"/>
    </location>
    <ligand>
        <name>K(+)</name>
        <dbReference type="ChEBI" id="CHEBI:29103"/>
    </ligand>
</feature>
<feature type="binding site" evidence="1">
    <location>
        <position position="249"/>
    </location>
    <ligand>
        <name>K(+)</name>
        <dbReference type="ChEBI" id="CHEBI:29103"/>
    </ligand>
</feature>
<feature type="binding site" evidence="1">
    <location>
        <position position="250"/>
    </location>
    <ligand>
        <name>Mg(2+)</name>
        <dbReference type="ChEBI" id="CHEBI:18420"/>
    </ligand>
</feature>
<feature type="binding site" evidence="1">
    <location>
        <begin position="269"/>
        <end position="272"/>
    </location>
    <ligand>
        <name>GTP</name>
        <dbReference type="ChEBI" id="CHEBI:37565"/>
    </ligand>
</feature>
<feature type="binding site" evidence="1">
    <location>
        <position position="445"/>
    </location>
    <ligand>
        <name>(6S)-5-formyl-5,6,7,8-tetrahydrofolate</name>
        <dbReference type="ChEBI" id="CHEBI:57457"/>
    </ligand>
</feature>
<keyword id="KW-0963">Cytoplasm</keyword>
<keyword id="KW-0342">GTP-binding</keyword>
<keyword id="KW-0378">Hydrolase</keyword>
<keyword id="KW-0460">Magnesium</keyword>
<keyword id="KW-0479">Metal-binding</keyword>
<keyword id="KW-0547">Nucleotide-binding</keyword>
<keyword id="KW-0630">Potassium</keyword>
<keyword id="KW-0819">tRNA processing</keyword>
<organism>
    <name type="scientific">Rickettsia conorii (strain ATCC VR-613 / Malish 7)</name>
    <dbReference type="NCBI Taxonomy" id="272944"/>
    <lineage>
        <taxon>Bacteria</taxon>
        <taxon>Pseudomonadati</taxon>
        <taxon>Pseudomonadota</taxon>
        <taxon>Alphaproteobacteria</taxon>
        <taxon>Rickettsiales</taxon>
        <taxon>Rickettsiaceae</taxon>
        <taxon>Rickettsieae</taxon>
        <taxon>Rickettsia</taxon>
        <taxon>spotted fever group</taxon>
    </lineage>
</organism>
<protein>
    <recommendedName>
        <fullName evidence="1">tRNA modification GTPase MnmE</fullName>
        <ecNumber evidence="1">3.6.-.-</ecNumber>
    </recommendedName>
</protein>